<accession>Q9TVY6</accession>
<accession>B3WFX0</accession>
<accession>O61537</accession>
<accession>Q8MLX3</accession>
<accession>Q8MM25</accession>
<accession>Q8MV49</accession>
<accession>Q8MV50</accession>
<accession>Q8MV51</accession>
<accession>Q8MV52</accession>
<accession>Q8MV53</accession>
<accession>Q8MV54</accession>
<keyword id="KW-0025">Alternative splicing</keyword>
<keyword id="KW-0130">Cell adhesion</keyword>
<keyword id="KW-0963">Cytoplasm</keyword>
<keyword id="KW-1015">Disulfide bond</keyword>
<keyword id="KW-0245">EGF-like domain</keyword>
<keyword id="KW-0278">Fertilization</keyword>
<keyword id="KW-0325">Glycoprotein</keyword>
<keyword id="KW-0472">Membrane</keyword>
<keyword id="KW-1185">Reference proteome</keyword>
<keyword id="KW-0677">Repeat</keyword>
<keyword id="KW-0732">Signal</keyword>
<keyword id="KW-0812">Transmembrane</keyword>
<keyword id="KW-1133">Transmembrane helix</keyword>
<dbReference type="EMBL" id="AF049327">
    <property type="protein sequence ID" value="AAC38980.1"/>
    <property type="molecule type" value="mRNA"/>
</dbReference>
<dbReference type="EMBL" id="Z81473">
    <property type="protein sequence ID" value="CAB60992.2"/>
    <property type="molecule type" value="Genomic_DNA"/>
</dbReference>
<dbReference type="EMBL" id="Z81063">
    <property type="protein sequence ID" value="CAB60992.2"/>
    <property type="status" value="JOINED"/>
    <property type="molecule type" value="Genomic_DNA"/>
</dbReference>
<dbReference type="EMBL" id="Z81473">
    <property type="protein sequence ID" value="CAQ76456.1"/>
    <property type="molecule type" value="Genomic_DNA"/>
</dbReference>
<dbReference type="EMBL" id="Z81063">
    <property type="protein sequence ID" value="CAQ76456.1"/>
    <property type="status" value="JOINED"/>
    <property type="molecule type" value="Genomic_DNA"/>
</dbReference>
<dbReference type="EMBL" id="AF492686">
    <property type="protein sequence ID" value="AAM49739.1"/>
    <property type="molecule type" value="Genomic_DNA"/>
</dbReference>
<dbReference type="EMBL" id="AF492687">
    <property type="protein sequence ID" value="AAM49740.1"/>
    <property type="molecule type" value="Genomic_DNA"/>
</dbReference>
<dbReference type="EMBL" id="AF492688">
    <property type="protein sequence ID" value="AAM49741.1"/>
    <property type="molecule type" value="Genomic_DNA"/>
</dbReference>
<dbReference type="EMBL" id="AF492690">
    <property type="protein sequence ID" value="AAM49742.1"/>
    <property type="molecule type" value="Genomic_DNA"/>
</dbReference>
<dbReference type="EMBL" id="AF492691">
    <property type="protein sequence ID" value="AAM49743.1"/>
    <property type="molecule type" value="Genomic_DNA"/>
</dbReference>
<dbReference type="EMBL" id="AF492692">
    <property type="protein sequence ID" value="AAM49744.1"/>
    <property type="molecule type" value="Genomic_DNA"/>
</dbReference>
<dbReference type="EMBL" id="AF492693">
    <property type="protein sequence ID" value="AAM49745.1"/>
    <property type="molecule type" value="Genomic_DNA"/>
</dbReference>
<dbReference type="EMBL" id="AF492694">
    <property type="protein sequence ID" value="AAM49746.1"/>
    <property type="molecule type" value="Genomic_DNA"/>
</dbReference>
<dbReference type="EMBL" id="AF492695">
    <property type="protein sequence ID" value="AAM49747.1"/>
    <property type="molecule type" value="Genomic_DNA"/>
</dbReference>
<dbReference type="EMBL" id="AF492696">
    <property type="protein sequence ID" value="AAM49748.1"/>
    <property type="molecule type" value="Genomic_DNA"/>
</dbReference>
<dbReference type="EMBL" id="AF492697">
    <property type="protein sequence ID" value="AAM49749.1"/>
    <property type="molecule type" value="Genomic_DNA"/>
</dbReference>
<dbReference type="EMBL" id="AF492698">
    <property type="protein sequence ID" value="AAM49750.1"/>
    <property type="molecule type" value="Genomic_DNA"/>
</dbReference>
<dbReference type="EMBL" id="AF492699">
    <property type="protein sequence ID" value="AAM49751.1"/>
    <property type="molecule type" value="Genomic_DNA"/>
</dbReference>
<dbReference type="EMBL" id="AF492700">
    <property type="protein sequence ID" value="AAM49752.1"/>
    <property type="molecule type" value="Genomic_DNA"/>
</dbReference>
<dbReference type="EMBL" id="AF492701">
    <property type="protein sequence ID" value="AAM49753.1"/>
    <property type="molecule type" value="Genomic_DNA"/>
</dbReference>
<dbReference type="PIR" id="T42754">
    <property type="entry name" value="T42754"/>
</dbReference>
<dbReference type="RefSeq" id="NP_001129750.1">
    <molecule id="Q9TVY6-2"/>
    <property type="nucleotide sequence ID" value="NM_001136278.3"/>
</dbReference>
<dbReference type="RefSeq" id="NP_492955.1">
    <molecule id="Q9TVY6-1"/>
    <property type="nucleotide sequence ID" value="NM_060554.5"/>
</dbReference>
<dbReference type="BioGRID" id="38449">
    <property type="interactions" value="8"/>
</dbReference>
<dbReference type="STRING" id="6239.C17D12.6a.1"/>
<dbReference type="GlyCosmos" id="Q9TVY6">
    <property type="glycosylation" value="9 sites, No reported glycans"/>
</dbReference>
<dbReference type="PaxDb" id="6239-C17D12.6a"/>
<dbReference type="EnsemblMetazoa" id="C17D12.6a.1">
    <molecule id="Q9TVY6-1"/>
    <property type="protein sequence ID" value="C17D12.6a.1"/>
    <property type="gene ID" value="WBGene00004963"/>
</dbReference>
<dbReference type="EnsemblMetazoa" id="C17D12.6b.1">
    <molecule id="Q9TVY6-2"/>
    <property type="protein sequence ID" value="C17D12.6b.1"/>
    <property type="gene ID" value="WBGene00004963"/>
</dbReference>
<dbReference type="GeneID" id="173042"/>
<dbReference type="KEGG" id="cel:CELE_C17D12.6"/>
<dbReference type="UCSC" id="C17D12.6">
    <property type="organism name" value="c. elegans"/>
</dbReference>
<dbReference type="AGR" id="WB:WBGene00004963"/>
<dbReference type="CTD" id="173042"/>
<dbReference type="WormBase" id="C17D12.6a">
    <molecule id="Q9TVY6-1"/>
    <property type="protein sequence ID" value="CE27074"/>
    <property type="gene ID" value="WBGene00004963"/>
    <property type="gene designation" value="spe-9"/>
</dbReference>
<dbReference type="WormBase" id="C17D12.6b">
    <molecule id="Q9TVY6-2"/>
    <property type="protein sequence ID" value="CE42755"/>
    <property type="gene ID" value="WBGene00004963"/>
    <property type="gene designation" value="spe-9"/>
</dbReference>
<dbReference type="eggNOG" id="KOG1217">
    <property type="taxonomic scope" value="Eukaryota"/>
</dbReference>
<dbReference type="HOGENOM" id="CLU_027231_0_0_1"/>
<dbReference type="InParanoid" id="Q9TVY6"/>
<dbReference type="OMA" id="GDCIPIP"/>
<dbReference type="OrthoDB" id="430340at2759"/>
<dbReference type="PhylomeDB" id="Q9TVY6"/>
<dbReference type="PRO" id="PR:Q9TVY6"/>
<dbReference type="Proteomes" id="UP000001940">
    <property type="component" value="Chromosome I"/>
</dbReference>
<dbReference type="Bgee" id="WBGene00004963">
    <property type="expression patterns" value="Expressed in larva and 1 other cell type or tissue"/>
</dbReference>
<dbReference type="GO" id="GO:0009986">
    <property type="term" value="C:cell surface"/>
    <property type="evidence" value="ECO:0000314"/>
    <property type="project" value="WormBase"/>
</dbReference>
<dbReference type="GO" id="GO:0005737">
    <property type="term" value="C:cytoplasm"/>
    <property type="evidence" value="ECO:0000314"/>
    <property type="project" value="WormBase"/>
</dbReference>
<dbReference type="GO" id="GO:0043227">
    <property type="term" value="C:membrane-bounded organelle"/>
    <property type="evidence" value="ECO:0000314"/>
    <property type="project" value="WormBase"/>
</dbReference>
<dbReference type="GO" id="GO:0005886">
    <property type="term" value="C:plasma membrane"/>
    <property type="evidence" value="ECO:0000250"/>
    <property type="project" value="WormBase"/>
</dbReference>
<dbReference type="GO" id="GO:0031143">
    <property type="term" value="C:pseudopodium"/>
    <property type="evidence" value="ECO:0000314"/>
    <property type="project" value="WormBase"/>
</dbReference>
<dbReference type="GO" id="GO:0005509">
    <property type="term" value="F:calcium ion binding"/>
    <property type="evidence" value="ECO:0007669"/>
    <property type="project" value="InterPro"/>
</dbReference>
<dbReference type="GO" id="GO:0005102">
    <property type="term" value="F:signaling receptor binding"/>
    <property type="evidence" value="ECO:0000250"/>
    <property type="project" value="WormBase"/>
</dbReference>
<dbReference type="GO" id="GO:0007155">
    <property type="term" value="P:cell adhesion"/>
    <property type="evidence" value="ECO:0007669"/>
    <property type="project" value="UniProtKB-KW"/>
</dbReference>
<dbReference type="GO" id="GO:0007338">
    <property type="term" value="P:single fertilization"/>
    <property type="evidence" value="ECO:0000315"/>
    <property type="project" value="WormBase"/>
</dbReference>
<dbReference type="FunFam" id="2.10.25.10:FF:001526">
    <property type="entry name" value="Sperm transmembrane protein 9"/>
    <property type="match status" value="1"/>
</dbReference>
<dbReference type="Gene3D" id="2.10.25.10">
    <property type="entry name" value="Laminin"/>
    <property type="match status" value="6"/>
</dbReference>
<dbReference type="InterPro" id="IPR001881">
    <property type="entry name" value="EGF-like_Ca-bd_dom"/>
</dbReference>
<dbReference type="InterPro" id="IPR000742">
    <property type="entry name" value="EGF-like_dom"/>
</dbReference>
<dbReference type="InterPro" id="IPR051022">
    <property type="entry name" value="Notch_Cell-Fate_Det"/>
</dbReference>
<dbReference type="PANTHER" id="PTHR24049">
    <property type="entry name" value="CRUMBS FAMILY MEMBER"/>
    <property type="match status" value="1"/>
</dbReference>
<dbReference type="PANTHER" id="PTHR24049:SF22">
    <property type="entry name" value="DROSOPHILA CRUMBS HOMOLOG"/>
    <property type="match status" value="1"/>
</dbReference>
<dbReference type="SMART" id="SM00181">
    <property type="entry name" value="EGF"/>
    <property type="match status" value="9"/>
</dbReference>
<dbReference type="SMART" id="SM00179">
    <property type="entry name" value="EGF_CA"/>
    <property type="match status" value="4"/>
</dbReference>
<dbReference type="SUPFAM" id="SSF57196">
    <property type="entry name" value="EGF/Laminin"/>
    <property type="match status" value="3"/>
</dbReference>
<dbReference type="PROSITE" id="PS00022">
    <property type="entry name" value="EGF_1"/>
    <property type="match status" value="6"/>
</dbReference>
<dbReference type="PROSITE" id="PS01186">
    <property type="entry name" value="EGF_2"/>
    <property type="match status" value="3"/>
</dbReference>
<dbReference type="PROSITE" id="PS50026">
    <property type="entry name" value="EGF_3"/>
    <property type="match status" value="5"/>
</dbReference>
<evidence type="ECO:0000255" key="1"/>
<evidence type="ECO:0000255" key="2">
    <source>
        <dbReference type="PROSITE-ProRule" id="PRU00076"/>
    </source>
</evidence>
<evidence type="ECO:0000269" key="3">
    <source>
    </source>
</evidence>
<evidence type="ECO:0000269" key="4">
    <source>
    </source>
</evidence>
<evidence type="ECO:0000269" key="5">
    <source>
    </source>
</evidence>
<evidence type="ECO:0000269" key="6">
    <source>
    </source>
</evidence>
<evidence type="ECO:0000269" key="7">
    <source>
    </source>
</evidence>
<evidence type="ECO:0000303" key="8">
    <source>
    </source>
</evidence>
<evidence type="ECO:0000305" key="9"/>
<evidence type="ECO:0000312" key="10">
    <source>
        <dbReference type="EMBL" id="AAC38980.1"/>
    </source>
</evidence>
<evidence type="ECO:0000312" key="11">
    <source>
        <dbReference type="EMBL" id="AAM49739.1"/>
    </source>
</evidence>
<evidence type="ECO:0000312" key="12">
    <source>
        <dbReference type="EMBL" id="AAM49741.1"/>
    </source>
</evidence>
<evidence type="ECO:0000312" key="13">
    <source>
        <dbReference type="EMBL" id="AAM49744.1"/>
    </source>
</evidence>
<evidence type="ECO:0000312" key="14">
    <source>
        <dbReference type="EMBL" id="AAM49746.1"/>
    </source>
</evidence>
<evidence type="ECO:0000312" key="15">
    <source>
        <dbReference type="EMBL" id="AAM49748.1"/>
    </source>
</evidence>
<evidence type="ECO:0000312" key="16">
    <source>
        <dbReference type="EMBL" id="AAM49749.1"/>
    </source>
</evidence>
<evidence type="ECO:0000312" key="17">
    <source>
        <dbReference type="EMBL" id="AAM49751.1"/>
    </source>
</evidence>
<evidence type="ECO:0000312" key="18">
    <source>
        <dbReference type="EMBL" id="CAB60992.2"/>
    </source>
</evidence>
<reference evidence="9 10" key="1">
    <citation type="journal article" date="1998" name="Cell">
        <title>The C. elegans spe-9 gene encodes a sperm transmembrane protein that contains EGF-like repeats and is required for fertilization.</title>
        <authorList>
            <person name="Singson A."/>
            <person name="Mercer K.B."/>
            <person name="L'Hernault S.W."/>
        </authorList>
    </citation>
    <scope>NUCLEOTIDE SEQUENCE [MRNA] (ISOFORM A)</scope>
    <scope>FUNCTION</scope>
    <scope>MUTAGENESIS OF CYS-258 AND GLY-550</scope>
</reference>
<reference evidence="18" key="2">
    <citation type="journal article" date="1998" name="Science">
        <title>Genome sequence of the nematode C. elegans: a platform for investigating biology.</title>
        <authorList>
            <consortium name="The C. elegans sequencing consortium"/>
        </authorList>
    </citation>
    <scope>NUCLEOTIDE SEQUENCE [LARGE SCALE GENOMIC DNA]</scope>
    <source>
        <strain>Bristol N2</strain>
    </source>
</reference>
<reference evidence="3 9 11" key="3">
    <citation type="journal article" date="2002" name="Genetics">
        <title>Levels of DNA polymorphism vary with mating system in the nematode genus Caenorhabditis.</title>
        <authorList>
            <person name="Graustein A."/>
            <person name="Gaspar J.M."/>
            <person name="Walters J.R."/>
            <person name="Palopoli M.F."/>
        </authorList>
    </citation>
    <scope>NUCLEOTIDE SEQUENCE [GENOMIC DNA] OF 15-661</scope>
    <source>
        <strain evidence="3">AB1</strain>
        <strain evidence="12">AB2</strain>
        <strain evidence="11">Bristol N2</strain>
        <strain evidence="3">CB4507</strain>
        <strain evidence="3">CB4851</strain>
        <strain evidence="3">CB4852</strain>
        <strain evidence="13">CB4853</strain>
        <strain evidence="3">CB4854</strain>
        <strain evidence="14">CB4855</strain>
        <strain evidence="3">CB4856</strain>
        <strain evidence="15">CB4857</strain>
        <strain evidence="16">CB4858</strain>
        <strain evidence="3">CB4932</strain>
        <strain evidence="17">DH424</strain>
        <strain evidence="3">DR1344</strain>
        <strain evidence="3">PB303</strain>
        <strain evidence="3">PB305</strain>
        <strain evidence="3">PB306</strain>
        <strain evidence="3">PB307</strain>
        <strain evidence="3">TR388</strain>
    </source>
</reference>
<reference evidence="9" key="4">
    <citation type="journal article" date="2003" name="BMC Dev. Biol.">
        <title>Dynamic localization of SPE-9 in sperm: a protein required for sperm-oocyte interactions in Caenorhabditis elegans.</title>
        <authorList>
            <person name="Zannoni S."/>
            <person name="L'Hernault S.W."/>
            <person name="Singson A.W."/>
        </authorList>
    </citation>
    <scope>SUBCELLULAR LOCATION</scope>
    <scope>TISSUE SPECIFICITY</scope>
</reference>
<reference evidence="9" key="5">
    <citation type="journal article" date="2004" name="Dev. Biol.">
        <title>Functional domains and temperature-sensitive mutations in SPE-9, an EGF repeat-containing protein required for fertility in Caenorhabditis elegans.</title>
        <authorList>
            <person name="Putiri E."/>
            <person name="Zannoni S."/>
            <person name="Kadandale P."/>
            <person name="Singson A."/>
        </authorList>
    </citation>
    <scope>FUNCTION</scope>
    <scope>TISSUE SPECIFICITY</scope>
    <scope>MUTAGENESIS OF CYS-258 AND GLY-550</scope>
</reference>
<organism>
    <name type="scientific">Caenorhabditis elegans</name>
    <dbReference type="NCBI Taxonomy" id="6239"/>
    <lineage>
        <taxon>Eukaryota</taxon>
        <taxon>Metazoa</taxon>
        <taxon>Ecdysozoa</taxon>
        <taxon>Nematoda</taxon>
        <taxon>Chromadorea</taxon>
        <taxon>Rhabditida</taxon>
        <taxon>Rhabditina</taxon>
        <taxon>Rhabditomorpha</taxon>
        <taxon>Rhabditoidea</taxon>
        <taxon>Rhabditidae</taxon>
        <taxon>Peloderinae</taxon>
        <taxon>Caenorhabditis</taxon>
    </lineage>
</organism>
<comment type="function">
    <text evidence="5 6">Required for fertilization. May be required for cell adhesion and/or function as a signaling molecule.</text>
</comment>
<comment type="subcellular location">
    <subcellularLocation>
        <location evidence="4 9">Cytoplasm</location>
    </subcellularLocation>
    <subcellularLocation>
        <location evidence="4 9">Membrane</location>
        <topology evidence="4">Single-pass type I membrane protein</topology>
    </subcellularLocation>
</comment>
<comment type="alternative products">
    <event type="alternative splicing"/>
    <isoform>
        <id>Q9TVY6-1</id>
        <name evidence="6">a</name>
        <sequence type="displayed"/>
    </isoform>
    <isoform>
        <id>Q9TVY6-2</id>
        <name evidence="7">b</name>
        <sequence type="described" ref="VSP_053190"/>
    </isoform>
</comment>
<comment type="tissue specificity">
    <text evidence="4 5">Expressed in spermatids, during spermogenesis expression is primarily localized to the pseudopod.</text>
</comment>
<comment type="miscellaneous">
    <text evidence="5">Removing the EGF-like repeats in any combination completely abolishes fertilization.</text>
</comment>
<comment type="miscellaneous">
    <text evidence="5 6">Modifying each EGF repeat by changing a central cysteine residue to a tyrosine disrupts the secondary structure as the specific disulfide bridges responsible for this overall structure are not formed. The cysteine to tyrosine mutation when located in EGF-like domains 1,3,4 and 5, causes a complete loss of function. The same mutation in additional EGF-like domains leads to a temperature sensitive sterile phenotype.</text>
</comment>
<gene>
    <name type="primary">spe-9</name>
    <name type="ORF">C17D12.6</name>
</gene>
<feature type="signal peptide" evidence="1">
    <location>
        <begin position="1"/>
        <end position="16"/>
    </location>
</feature>
<feature type="chain" id="PRO_0000391385" description="Sperm transmembrane protein 9" evidence="5">
    <location>
        <begin position="17"/>
        <end position="661"/>
    </location>
</feature>
<feature type="topological domain" description="Extracellular" evidence="1">
    <location>
        <begin position="17"/>
        <end position="618"/>
    </location>
</feature>
<feature type="transmembrane region" description="Helical" evidence="1">
    <location>
        <begin position="619"/>
        <end position="639"/>
    </location>
</feature>
<feature type="topological domain" description="Cytoplasmic" evidence="1">
    <location>
        <begin position="640"/>
        <end position="661"/>
    </location>
</feature>
<feature type="domain" description="EGF-like 1" evidence="2">
    <location>
        <begin position="52"/>
        <end position="90"/>
    </location>
</feature>
<feature type="domain" description="EGF-like 2" evidence="2">
    <location>
        <begin position="210"/>
        <end position="259"/>
    </location>
</feature>
<feature type="domain" description="EGF-like 3" evidence="2">
    <location>
        <begin position="377"/>
        <end position="414"/>
    </location>
</feature>
<feature type="domain" description="EGF-like 4" evidence="2">
    <location>
        <begin position="519"/>
        <end position="557"/>
    </location>
</feature>
<feature type="domain" description="EGF-like 5" evidence="2">
    <location>
        <begin position="559"/>
        <end position="600"/>
    </location>
</feature>
<feature type="short sequence motif" description="Cell attachment site" evidence="1">
    <location>
        <begin position="377"/>
        <end position="379"/>
    </location>
</feature>
<feature type="glycosylation site" description="N-linked (GlcNAc...) asparagine" evidence="1">
    <location>
        <position position="105"/>
    </location>
</feature>
<feature type="glycosylation site" description="N-linked (GlcNAc...) asparagine" evidence="1">
    <location>
        <position position="106"/>
    </location>
</feature>
<feature type="glycosylation site" description="N-linked (GlcNAc...) asparagine" evidence="1">
    <location>
        <position position="134"/>
    </location>
</feature>
<feature type="glycosylation site" description="N-linked (GlcNAc...) asparagine" evidence="1">
    <location>
        <position position="190"/>
    </location>
</feature>
<feature type="glycosylation site" description="N-linked (GlcNAc...) asparagine" evidence="1">
    <location>
        <position position="279"/>
    </location>
</feature>
<feature type="glycosylation site" description="N-linked (GlcNAc...) asparagine" evidence="1">
    <location>
        <position position="290"/>
    </location>
</feature>
<feature type="glycosylation site" description="N-linked (GlcNAc...) asparagine" evidence="1">
    <location>
        <position position="316"/>
    </location>
</feature>
<feature type="glycosylation site" description="N-linked (GlcNAc...) asparagine" evidence="1">
    <location>
        <position position="338"/>
    </location>
</feature>
<feature type="glycosylation site" description="N-linked (GlcNAc...) asparagine" evidence="1">
    <location>
        <position position="549"/>
    </location>
</feature>
<feature type="disulfide bond" evidence="2">
    <location>
        <begin position="56"/>
        <end position="69"/>
    </location>
</feature>
<feature type="disulfide bond" evidence="2">
    <location>
        <begin position="63"/>
        <end position="78"/>
    </location>
</feature>
<feature type="disulfide bond" evidence="2">
    <location>
        <begin position="80"/>
        <end position="89"/>
    </location>
</feature>
<feature type="disulfide bond" evidence="2">
    <location>
        <begin position="214"/>
        <end position="225"/>
    </location>
</feature>
<feature type="disulfide bond" evidence="2">
    <location>
        <begin position="219"/>
        <end position="240"/>
    </location>
</feature>
<feature type="disulfide bond" evidence="2">
    <location>
        <begin position="242"/>
        <end position="258"/>
    </location>
</feature>
<feature type="disulfide bond" evidence="2">
    <location>
        <begin position="385"/>
        <end position="402"/>
    </location>
</feature>
<feature type="disulfide bond" evidence="2">
    <location>
        <begin position="393"/>
        <end position="404"/>
    </location>
</feature>
<feature type="disulfide bond" evidence="2">
    <location>
        <begin position="413"/>
        <end position="419"/>
    </location>
</feature>
<feature type="disulfide bond" evidence="2">
    <location>
        <begin position="523"/>
        <end position="534"/>
    </location>
</feature>
<feature type="disulfide bond" evidence="2">
    <location>
        <begin position="528"/>
        <end position="545"/>
    </location>
</feature>
<feature type="disulfide bond" evidence="2">
    <location>
        <begin position="547"/>
        <end position="556"/>
    </location>
</feature>
<feature type="disulfide bond" evidence="2">
    <location>
        <begin position="563"/>
        <end position="576"/>
    </location>
</feature>
<feature type="disulfide bond" evidence="2">
    <location>
        <begin position="571"/>
        <end position="588"/>
    </location>
</feature>
<feature type="disulfide bond" evidence="2">
    <location>
        <begin position="590"/>
        <end position="599"/>
    </location>
</feature>
<feature type="splice variant" id="VSP_053190" description="In isoform b." evidence="8">
    <location>
        <begin position="1"/>
        <end position="281"/>
    </location>
</feature>
<feature type="mutagenesis site" description="Disrupts formation of specific disulfide bridges resulting in loss of function." evidence="5 6">
    <original>C</original>
    <variation>Y</variation>
    <location>
        <position position="258"/>
    </location>
</feature>
<feature type="mutagenesis site" description="Temperature sensitive for fertility. Wild-type levels of fertility between 16 and 20 degrees Celsius, at 25 degrees Celsius fertility levels drop drastically." evidence="5 6">
    <original>G</original>
    <variation>E</variation>
    <location>
        <position position="550"/>
    </location>
</feature>
<feature type="sequence conflict" description="In Ref. 3; AAM49747." evidence="9" ref="3">
    <original>V</original>
    <variation>L</variation>
    <location>
        <position position="47"/>
    </location>
</feature>
<feature type="sequence conflict" description="In Ref. 3; AAM49747." evidence="9" ref="3">
    <original>A</original>
    <variation>T</variation>
    <location>
        <position position="245"/>
    </location>
</feature>
<name>SPE9_CAEEL</name>
<protein>
    <recommendedName>
        <fullName>Sperm transmembrane protein 9</fullName>
    </recommendedName>
    <alternativeName>
        <fullName>Fertilization defective 9</fullName>
    </alternativeName>
    <alternativeName>
        <fullName>Spermatogenesis defective 9</fullName>
    </alternativeName>
</protein>
<proteinExistence type="evidence at protein level"/>
<sequence length="661" mass="73600">MNVILVLVVLFFAGDCAKIRKIIDFLEKDAPNDIEKTPNYNEESLAVKRNKNFNPCLENPKICSNRGKCLHENGNFYCICPVTHYGKTCEHVSDQTNCEKHLCQNNSTCVSIKSLRTIVNTVLLRQIRVQRKVNGSKAALTNEELAEIDLEVNYECICQKGYFGGLCDESEADRTCQEVYCLGRGKGAINATGKCECECENQFFGDRCEQISACFDTQCDNGGICEDVVDWKTKTVTATCKCPSAIELIGGTVTGENCETLQIPSTAPKEFIPCAEGSNSTMFFKKFIANISLEYMDDISELEAIKNDYNDGKNVNGTMTDGWCRNDGKCVPEVVRVNSSRAYYIYRCECTNPLTDGYYCEYKRHDSCSLTREEVARGDRWDEKCTDSQHGACVDISGVAHCVCKPDYTGEKCEIFDPCARQPCKHGDCIPIPNTADVAFGTSRYQCLCPLSAKLNPESQACMEINEKKCAPGACGNGRCVPCESDADDLMPLCNDNDNRQGFRCLCEAGYLPPFCKVHTNPCYQNLCQNSATCHIDPKQRSYDCQCVNGTRGSLCENVDDSCDAFGNKICVHGTCINDEYFHRGFSCECDDGFEGLDCNVEIAWSSVMTNRLMKNYEFSLPLVACFVSLAILLPVIVISRRRQGRVEEAKKTSEVKTENP</sequence>